<reference key="1">
    <citation type="submission" date="2005-10" db="EMBL/GenBank/DDBJ databases">
        <title>Complete sequence of chromosome 1 of Burkholderia sp. 383.</title>
        <authorList>
            <consortium name="US DOE Joint Genome Institute"/>
            <person name="Copeland A."/>
            <person name="Lucas S."/>
            <person name="Lapidus A."/>
            <person name="Barry K."/>
            <person name="Detter J.C."/>
            <person name="Glavina T."/>
            <person name="Hammon N."/>
            <person name="Israni S."/>
            <person name="Pitluck S."/>
            <person name="Chain P."/>
            <person name="Malfatti S."/>
            <person name="Shin M."/>
            <person name="Vergez L."/>
            <person name="Schmutz J."/>
            <person name="Larimer F."/>
            <person name="Land M."/>
            <person name="Kyrpides N."/>
            <person name="Lykidis A."/>
            <person name="Richardson P."/>
        </authorList>
    </citation>
    <scope>NUCLEOTIDE SEQUENCE [LARGE SCALE GENOMIC DNA]</scope>
    <source>
        <strain>ATCC 17760 / DSM 23089 / LMG 22485 / NCIMB 9086 / R18194 / 383</strain>
    </source>
</reference>
<gene>
    <name evidence="1" type="primary">serC</name>
    <name type="ordered locus">Bcep18194_A4155</name>
</gene>
<feature type="chain" id="PRO_1000058205" description="Phosphoserine aminotransferase">
    <location>
        <begin position="1"/>
        <end position="360"/>
    </location>
</feature>
<feature type="binding site" evidence="1">
    <location>
        <position position="41"/>
    </location>
    <ligand>
        <name>L-glutamate</name>
        <dbReference type="ChEBI" id="CHEBI:29985"/>
    </ligand>
</feature>
<feature type="binding site" evidence="1">
    <location>
        <position position="101"/>
    </location>
    <ligand>
        <name>pyridoxal 5'-phosphate</name>
        <dbReference type="ChEBI" id="CHEBI:597326"/>
    </ligand>
</feature>
<feature type="binding site" evidence="1">
    <location>
        <position position="152"/>
    </location>
    <ligand>
        <name>pyridoxal 5'-phosphate</name>
        <dbReference type="ChEBI" id="CHEBI:597326"/>
    </ligand>
</feature>
<feature type="binding site" evidence="1">
    <location>
        <position position="172"/>
    </location>
    <ligand>
        <name>pyridoxal 5'-phosphate</name>
        <dbReference type="ChEBI" id="CHEBI:597326"/>
    </ligand>
</feature>
<feature type="binding site" evidence="1">
    <location>
        <position position="195"/>
    </location>
    <ligand>
        <name>pyridoxal 5'-phosphate</name>
        <dbReference type="ChEBI" id="CHEBI:597326"/>
    </ligand>
</feature>
<feature type="binding site" evidence="1">
    <location>
        <begin position="237"/>
        <end position="238"/>
    </location>
    <ligand>
        <name>pyridoxal 5'-phosphate</name>
        <dbReference type="ChEBI" id="CHEBI:597326"/>
    </ligand>
</feature>
<feature type="modified residue" description="N6-(pyridoxal phosphate)lysine" evidence="1">
    <location>
        <position position="196"/>
    </location>
</feature>
<comment type="function">
    <text evidence="1">Catalyzes the reversible conversion of 3-phosphohydroxypyruvate to phosphoserine and of 3-hydroxy-2-oxo-4-phosphonooxybutanoate to phosphohydroxythreonine.</text>
</comment>
<comment type="catalytic activity">
    <reaction evidence="1">
        <text>O-phospho-L-serine + 2-oxoglutarate = 3-phosphooxypyruvate + L-glutamate</text>
        <dbReference type="Rhea" id="RHEA:14329"/>
        <dbReference type="ChEBI" id="CHEBI:16810"/>
        <dbReference type="ChEBI" id="CHEBI:18110"/>
        <dbReference type="ChEBI" id="CHEBI:29985"/>
        <dbReference type="ChEBI" id="CHEBI:57524"/>
        <dbReference type="EC" id="2.6.1.52"/>
    </reaction>
</comment>
<comment type="catalytic activity">
    <reaction evidence="1">
        <text>4-(phosphooxy)-L-threonine + 2-oxoglutarate = (R)-3-hydroxy-2-oxo-4-phosphooxybutanoate + L-glutamate</text>
        <dbReference type="Rhea" id="RHEA:16573"/>
        <dbReference type="ChEBI" id="CHEBI:16810"/>
        <dbReference type="ChEBI" id="CHEBI:29985"/>
        <dbReference type="ChEBI" id="CHEBI:58452"/>
        <dbReference type="ChEBI" id="CHEBI:58538"/>
        <dbReference type="EC" id="2.6.1.52"/>
    </reaction>
</comment>
<comment type="cofactor">
    <cofactor evidence="1">
        <name>pyridoxal 5'-phosphate</name>
        <dbReference type="ChEBI" id="CHEBI:597326"/>
    </cofactor>
    <text evidence="1">Binds 1 pyridoxal phosphate per subunit.</text>
</comment>
<comment type="pathway">
    <text evidence="1">Amino-acid biosynthesis; L-serine biosynthesis; L-serine from 3-phospho-D-glycerate: step 2/3.</text>
</comment>
<comment type="pathway">
    <text evidence="1">Cofactor biosynthesis; pyridoxine 5'-phosphate biosynthesis; pyridoxine 5'-phosphate from D-erythrose 4-phosphate: step 3/5.</text>
</comment>
<comment type="subunit">
    <text evidence="1">Homodimer.</text>
</comment>
<comment type="subcellular location">
    <subcellularLocation>
        <location evidence="1">Cytoplasm</location>
    </subcellularLocation>
</comment>
<comment type="similarity">
    <text evidence="1">Belongs to the class-V pyridoxal-phosphate-dependent aminotransferase family. SerC subfamily.</text>
</comment>
<accession>Q39IG4</accession>
<evidence type="ECO:0000255" key="1">
    <source>
        <dbReference type="HAMAP-Rule" id="MF_00160"/>
    </source>
</evidence>
<dbReference type="EC" id="2.6.1.52" evidence="1"/>
<dbReference type="EMBL" id="CP000151">
    <property type="protein sequence ID" value="ABB07752.1"/>
    <property type="molecule type" value="Genomic_DNA"/>
</dbReference>
<dbReference type="RefSeq" id="WP_011351330.1">
    <property type="nucleotide sequence ID" value="NC_007510.1"/>
</dbReference>
<dbReference type="SMR" id="Q39IG4"/>
<dbReference type="GeneID" id="45094054"/>
<dbReference type="KEGG" id="bur:Bcep18194_A4155"/>
<dbReference type="PATRIC" id="fig|482957.22.peg.1042"/>
<dbReference type="HOGENOM" id="CLU_034866_0_2_4"/>
<dbReference type="UniPathway" id="UPA00135">
    <property type="reaction ID" value="UER00197"/>
</dbReference>
<dbReference type="UniPathway" id="UPA00244">
    <property type="reaction ID" value="UER00311"/>
</dbReference>
<dbReference type="Proteomes" id="UP000002705">
    <property type="component" value="Chromosome 1"/>
</dbReference>
<dbReference type="GO" id="GO:0005737">
    <property type="term" value="C:cytoplasm"/>
    <property type="evidence" value="ECO:0007669"/>
    <property type="project" value="UniProtKB-SubCell"/>
</dbReference>
<dbReference type="GO" id="GO:0004648">
    <property type="term" value="F:O-phospho-L-serine:2-oxoglutarate aminotransferase activity"/>
    <property type="evidence" value="ECO:0007669"/>
    <property type="project" value="UniProtKB-UniRule"/>
</dbReference>
<dbReference type="GO" id="GO:0030170">
    <property type="term" value="F:pyridoxal phosphate binding"/>
    <property type="evidence" value="ECO:0007669"/>
    <property type="project" value="UniProtKB-UniRule"/>
</dbReference>
<dbReference type="GO" id="GO:0006564">
    <property type="term" value="P:L-serine biosynthetic process"/>
    <property type="evidence" value="ECO:0007669"/>
    <property type="project" value="UniProtKB-UniRule"/>
</dbReference>
<dbReference type="GO" id="GO:0008615">
    <property type="term" value="P:pyridoxine biosynthetic process"/>
    <property type="evidence" value="ECO:0007669"/>
    <property type="project" value="UniProtKB-UniRule"/>
</dbReference>
<dbReference type="CDD" id="cd00611">
    <property type="entry name" value="PSAT_like"/>
    <property type="match status" value="1"/>
</dbReference>
<dbReference type="FunFam" id="3.40.640.10:FF:000010">
    <property type="entry name" value="Phosphoserine aminotransferase"/>
    <property type="match status" value="1"/>
</dbReference>
<dbReference type="FunFam" id="3.90.1150.10:FF:000006">
    <property type="entry name" value="Phosphoserine aminotransferase"/>
    <property type="match status" value="1"/>
</dbReference>
<dbReference type="Gene3D" id="3.90.1150.10">
    <property type="entry name" value="Aspartate Aminotransferase, domain 1"/>
    <property type="match status" value="1"/>
</dbReference>
<dbReference type="Gene3D" id="3.40.640.10">
    <property type="entry name" value="Type I PLP-dependent aspartate aminotransferase-like (Major domain)"/>
    <property type="match status" value="1"/>
</dbReference>
<dbReference type="HAMAP" id="MF_00160">
    <property type="entry name" value="SerC_aminotrans_5"/>
    <property type="match status" value="1"/>
</dbReference>
<dbReference type="InterPro" id="IPR000192">
    <property type="entry name" value="Aminotrans_V_dom"/>
</dbReference>
<dbReference type="InterPro" id="IPR020578">
    <property type="entry name" value="Aminotrans_V_PyrdxlP_BS"/>
</dbReference>
<dbReference type="InterPro" id="IPR022278">
    <property type="entry name" value="Pser_aminoTfrase"/>
</dbReference>
<dbReference type="InterPro" id="IPR015424">
    <property type="entry name" value="PyrdxlP-dep_Trfase"/>
</dbReference>
<dbReference type="InterPro" id="IPR015421">
    <property type="entry name" value="PyrdxlP-dep_Trfase_major"/>
</dbReference>
<dbReference type="InterPro" id="IPR015422">
    <property type="entry name" value="PyrdxlP-dep_Trfase_small"/>
</dbReference>
<dbReference type="NCBIfam" id="NF003764">
    <property type="entry name" value="PRK05355.1"/>
    <property type="match status" value="1"/>
</dbReference>
<dbReference type="NCBIfam" id="TIGR01364">
    <property type="entry name" value="serC_1"/>
    <property type="match status" value="1"/>
</dbReference>
<dbReference type="PANTHER" id="PTHR43247">
    <property type="entry name" value="PHOSPHOSERINE AMINOTRANSFERASE"/>
    <property type="match status" value="1"/>
</dbReference>
<dbReference type="PANTHER" id="PTHR43247:SF1">
    <property type="entry name" value="PHOSPHOSERINE AMINOTRANSFERASE"/>
    <property type="match status" value="1"/>
</dbReference>
<dbReference type="Pfam" id="PF00266">
    <property type="entry name" value="Aminotran_5"/>
    <property type="match status" value="1"/>
</dbReference>
<dbReference type="PIRSF" id="PIRSF000525">
    <property type="entry name" value="SerC"/>
    <property type="match status" value="1"/>
</dbReference>
<dbReference type="SUPFAM" id="SSF53383">
    <property type="entry name" value="PLP-dependent transferases"/>
    <property type="match status" value="1"/>
</dbReference>
<dbReference type="PROSITE" id="PS00595">
    <property type="entry name" value="AA_TRANSFER_CLASS_5"/>
    <property type="match status" value="1"/>
</dbReference>
<proteinExistence type="inferred from homology"/>
<sequence length="360" mass="39465">MRVFNFSAGPAAMPEEVLRQAADEMLDWHGSGMSVMEMSHRGKEFMSIHEAALTDLRDLLGVPASHRILFLQGGGIAENAIVPMNLLGSRKTADFVVTGSWSQKSFTEAKKYGTPHLAATGKTEDGYTRAPVRAEWQLSDDPAYVHLCTNETIDGVETFEIPDLGDVPLVADVSSHILSRPMDVAKYGVLFGGAQKNIGMAGVTLVIVREDLLDRALSICPSAFEWKTIAANNSLYNTPPTYAIYIAGLVFQWLKRQGGLEAIEARNIEKAKLLYDTIDSSSFYLNKVEPAARSRMNVPFFLADETRNEDFLAGAKARGLLQLKGHKSVGGMRASIYNAVPLEGVKALVEYMKDFEQRGA</sequence>
<organism>
    <name type="scientific">Burkholderia lata (strain ATCC 17760 / DSM 23089 / LMG 22485 / NCIMB 9086 / R18194 / 383)</name>
    <dbReference type="NCBI Taxonomy" id="482957"/>
    <lineage>
        <taxon>Bacteria</taxon>
        <taxon>Pseudomonadati</taxon>
        <taxon>Pseudomonadota</taxon>
        <taxon>Betaproteobacteria</taxon>
        <taxon>Burkholderiales</taxon>
        <taxon>Burkholderiaceae</taxon>
        <taxon>Burkholderia</taxon>
        <taxon>Burkholderia cepacia complex</taxon>
    </lineage>
</organism>
<name>SERC_BURL3</name>
<keyword id="KW-0028">Amino-acid biosynthesis</keyword>
<keyword id="KW-0032">Aminotransferase</keyword>
<keyword id="KW-0963">Cytoplasm</keyword>
<keyword id="KW-0663">Pyridoxal phosphate</keyword>
<keyword id="KW-0664">Pyridoxine biosynthesis</keyword>
<keyword id="KW-0718">Serine biosynthesis</keyword>
<keyword id="KW-0808">Transferase</keyword>
<protein>
    <recommendedName>
        <fullName evidence="1">Phosphoserine aminotransferase</fullName>
        <ecNumber evidence="1">2.6.1.52</ecNumber>
    </recommendedName>
    <alternativeName>
        <fullName evidence="1">Phosphohydroxythreonine aminotransferase</fullName>
        <shortName evidence="1">PSAT</shortName>
    </alternativeName>
</protein>